<keyword id="KW-0002">3D-structure</keyword>
<keyword id="KW-0496">Mitochondrion</keyword>
<keyword id="KW-1185">Reference proteome</keyword>
<keyword id="KW-0809">Transit peptide</keyword>
<comment type="subcellular location">
    <subcellularLocation>
        <location evidence="2">Mitochondrion</location>
    </subcellularLocation>
</comment>
<comment type="disruption phenotype">
    <text evidence="4">Increases frequency of mitochondrial genome loss.</text>
</comment>
<comment type="miscellaneous">
    <text evidence="3">Present with 1350 molecules/cell in log phase SD medium.</text>
</comment>
<comment type="similarity">
    <text evidence="5">Belongs to the AIM18/AIM46 family.</text>
</comment>
<feature type="transit peptide" description="Mitochondrion" evidence="1">
    <location>
        <begin position="1"/>
        <end position="72"/>
    </location>
</feature>
<feature type="chain" id="PRO_0000202939" description="Altered inheritance of mitochondria protein 18, mitochondrial">
    <location>
        <begin position="73"/>
        <end position="321"/>
    </location>
</feature>
<feature type="strand" evidence="6">
    <location>
        <begin position="100"/>
        <end position="104"/>
    </location>
</feature>
<feature type="turn" evidence="6">
    <location>
        <begin position="106"/>
        <end position="108"/>
    </location>
</feature>
<feature type="strand" evidence="6">
    <location>
        <begin position="115"/>
        <end position="125"/>
    </location>
</feature>
<feature type="turn" evidence="6">
    <location>
        <begin position="126"/>
        <end position="129"/>
    </location>
</feature>
<feature type="strand" evidence="6">
    <location>
        <begin position="130"/>
        <end position="140"/>
    </location>
</feature>
<feature type="helix" evidence="6">
    <location>
        <begin position="141"/>
        <end position="145"/>
    </location>
</feature>
<feature type="helix" evidence="6">
    <location>
        <begin position="146"/>
        <end position="150"/>
    </location>
</feature>
<feature type="helix" evidence="6">
    <location>
        <begin position="153"/>
        <end position="159"/>
    </location>
</feature>
<feature type="helix" evidence="6">
    <location>
        <begin position="169"/>
        <end position="178"/>
    </location>
</feature>
<feature type="helix" evidence="6">
    <location>
        <begin position="182"/>
        <end position="193"/>
    </location>
</feature>
<feature type="strand" evidence="6">
    <location>
        <begin position="198"/>
        <end position="206"/>
    </location>
</feature>
<feature type="helix" evidence="6">
    <location>
        <begin position="210"/>
        <end position="221"/>
    </location>
</feature>
<feature type="helix" evidence="6">
    <location>
        <begin position="227"/>
        <end position="230"/>
    </location>
</feature>
<feature type="helix" evidence="6">
    <location>
        <begin position="231"/>
        <end position="244"/>
    </location>
</feature>
<feature type="strand" evidence="6">
    <location>
        <begin position="249"/>
        <end position="251"/>
    </location>
</feature>
<feature type="strand" evidence="6">
    <location>
        <begin position="256"/>
        <end position="261"/>
    </location>
</feature>
<feature type="strand" evidence="6">
    <location>
        <begin position="267"/>
        <end position="273"/>
    </location>
</feature>
<feature type="turn" evidence="6">
    <location>
        <begin position="274"/>
        <end position="277"/>
    </location>
</feature>
<feature type="strand" evidence="6">
    <location>
        <begin position="278"/>
        <end position="285"/>
    </location>
</feature>
<feature type="helix" evidence="6">
    <location>
        <begin position="288"/>
        <end position="300"/>
    </location>
</feature>
<feature type="helix" evidence="6">
    <location>
        <begin position="307"/>
        <end position="319"/>
    </location>
</feature>
<reference key="1">
    <citation type="journal article" date="1994" name="Science">
        <title>Complete nucleotide sequence of Saccharomyces cerevisiae chromosome VIII.</title>
        <authorList>
            <person name="Johnston M."/>
            <person name="Andrews S."/>
            <person name="Brinkman R."/>
            <person name="Cooper J."/>
            <person name="Ding H."/>
            <person name="Dover J."/>
            <person name="Du Z."/>
            <person name="Favello A."/>
            <person name="Fulton L."/>
            <person name="Gattung S."/>
            <person name="Geisel C."/>
            <person name="Kirsten J."/>
            <person name="Kucaba T."/>
            <person name="Hillier L.W."/>
            <person name="Jier M."/>
            <person name="Johnston L."/>
            <person name="Langston Y."/>
            <person name="Latreille P."/>
            <person name="Louis E.J."/>
            <person name="Macri C."/>
            <person name="Mardis E."/>
            <person name="Menezes S."/>
            <person name="Mouser L."/>
            <person name="Nhan M."/>
            <person name="Rifkin L."/>
            <person name="Riles L."/>
            <person name="St Peter H."/>
            <person name="Trevaskis E."/>
            <person name="Vaughan K."/>
            <person name="Vignati D."/>
            <person name="Wilcox L."/>
            <person name="Wohldman P."/>
            <person name="Waterston R."/>
            <person name="Wilson R."/>
            <person name="Vaudin M."/>
        </authorList>
    </citation>
    <scope>NUCLEOTIDE SEQUENCE [LARGE SCALE GENOMIC DNA]</scope>
    <source>
        <strain>ATCC 204508 / S288c</strain>
    </source>
</reference>
<reference key="2">
    <citation type="journal article" date="2014" name="G3 (Bethesda)">
        <title>The reference genome sequence of Saccharomyces cerevisiae: Then and now.</title>
        <authorList>
            <person name="Engel S.R."/>
            <person name="Dietrich F.S."/>
            <person name="Fisk D.G."/>
            <person name="Binkley G."/>
            <person name="Balakrishnan R."/>
            <person name="Costanzo M.C."/>
            <person name="Dwight S.S."/>
            <person name="Hitz B.C."/>
            <person name="Karra K."/>
            <person name="Nash R.S."/>
            <person name="Weng S."/>
            <person name="Wong E.D."/>
            <person name="Lloyd P."/>
            <person name="Skrzypek M.S."/>
            <person name="Miyasato S.R."/>
            <person name="Simison M."/>
            <person name="Cherry J.M."/>
        </authorList>
    </citation>
    <scope>GENOME REANNOTATION</scope>
    <source>
        <strain>ATCC 204508 / S288c</strain>
    </source>
</reference>
<reference key="3">
    <citation type="journal article" date="2007" name="Genome Res.">
        <title>Approaching a complete repository of sequence-verified protein-encoding clones for Saccharomyces cerevisiae.</title>
        <authorList>
            <person name="Hu Y."/>
            <person name="Rolfs A."/>
            <person name="Bhullar B."/>
            <person name="Murthy T.V.S."/>
            <person name="Zhu C."/>
            <person name="Berger M.F."/>
            <person name="Camargo A.A."/>
            <person name="Kelley F."/>
            <person name="McCarron S."/>
            <person name="Jepson D."/>
            <person name="Richardson A."/>
            <person name="Raphael J."/>
            <person name="Moreira D."/>
            <person name="Taycher E."/>
            <person name="Zuo D."/>
            <person name="Mohr S."/>
            <person name="Kane M.F."/>
            <person name="Williamson J."/>
            <person name="Simpson A.J.G."/>
            <person name="Bulyk M.L."/>
            <person name="Harlow E."/>
            <person name="Marsischky G."/>
            <person name="Kolodner R.D."/>
            <person name="LaBaer J."/>
        </authorList>
    </citation>
    <scope>NUCLEOTIDE SEQUENCE [GENOMIC DNA]</scope>
    <source>
        <strain>ATCC 204508 / S288c</strain>
    </source>
</reference>
<reference key="4">
    <citation type="journal article" date="2003" name="Nature">
        <title>Global analysis of protein localization in budding yeast.</title>
        <authorList>
            <person name="Huh W.-K."/>
            <person name="Falvo J.V."/>
            <person name="Gerke L.C."/>
            <person name="Carroll A.S."/>
            <person name="Howson R.W."/>
            <person name="Weissman J.S."/>
            <person name="O'Shea E.K."/>
        </authorList>
    </citation>
    <scope>SUBCELLULAR LOCATION [LARGE SCALE ANALYSIS]</scope>
</reference>
<reference key="5">
    <citation type="journal article" date="2003" name="Nature">
        <title>Global analysis of protein expression in yeast.</title>
        <authorList>
            <person name="Ghaemmaghami S."/>
            <person name="Huh W.-K."/>
            <person name="Bower K."/>
            <person name="Howson R.W."/>
            <person name="Belle A."/>
            <person name="Dephoure N."/>
            <person name="O'Shea E.K."/>
            <person name="Weissman J.S."/>
        </authorList>
    </citation>
    <scope>LEVEL OF PROTEIN EXPRESSION [LARGE SCALE ANALYSIS]</scope>
</reference>
<reference key="6">
    <citation type="journal article" date="2009" name="PLoS Genet.">
        <title>Computationally driven, quantitative experiments discover genes required for mitochondrial biogenesis.</title>
        <authorList>
            <person name="Hess D.C."/>
            <person name="Myers C.L."/>
            <person name="Huttenhower C."/>
            <person name="Hibbs M.A."/>
            <person name="Hayes A.P."/>
            <person name="Paw J."/>
            <person name="Clore J.J."/>
            <person name="Mendoza R.M."/>
            <person name="Luis B.S."/>
            <person name="Nislow C."/>
            <person name="Giaever G."/>
            <person name="Costanzo M."/>
            <person name="Troyanskaya O.G."/>
            <person name="Caudy A.A."/>
        </authorList>
    </citation>
    <scope>DISRUPTION PHENOTYPE</scope>
</reference>
<gene>
    <name type="primary">AIM18</name>
    <name type="synonym">FMP22</name>
    <name type="ordered locus">YHR198C</name>
</gene>
<proteinExistence type="evidence at protein level"/>
<sequence>MDRGRCANMLKSLQRTLAKCQKSPSTNHWQCFKRNFTSIRATKYPGRSNSTFHYWPWFAASTLLATSLYYRDRPVQNDDKTDAFPSHTESIQVDSSVSDFPLTITALNFPVSTTFKLLGYGQRHVTFLRFKVYALGLYLAENDENLVSDTLNETYLHKYFLDVDDSKTPKENLARLLKRDDSKSVMMIDDLLDSGMRMLAKITPVRNTDFKHLKEGLVKTISKHPDVANNKDTLAKGLSELNDAFSRKGSVRKNDDLIIELLANGALQFSYHDSKNNEFEVMGVVNNQLVGKFLFSQYLCGEKSPSPQAKKTAIDKLITLL</sequence>
<accession>P38884</accession>
<accession>D3DLE6</accession>
<dbReference type="EMBL" id="U00030">
    <property type="protein sequence ID" value="AAB68373.1"/>
    <property type="molecule type" value="Genomic_DNA"/>
</dbReference>
<dbReference type="EMBL" id="AY558106">
    <property type="protein sequence ID" value="AAS56432.1"/>
    <property type="molecule type" value="Genomic_DNA"/>
</dbReference>
<dbReference type="EMBL" id="BK006934">
    <property type="protein sequence ID" value="DAA06890.1"/>
    <property type="molecule type" value="Genomic_DNA"/>
</dbReference>
<dbReference type="PIR" id="S46690">
    <property type="entry name" value="S46690"/>
</dbReference>
<dbReference type="RefSeq" id="NP_012068.1">
    <property type="nucleotide sequence ID" value="NM_001179329.1"/>
</dbReference>
<dbReference type="PDB" id="8EW8">
    <property type="method" value="X-ray"/>
    <property type="resolution" value="2.15 A"/>
    <property type="chains" value="A=73-321"/>
</dbReference>
<dbReference type="PDBsum" id="8EW8"/>
<dbReference type="SMR" id="P38884"/>
<dbReference type="BioGRID" id="36632">
    <property type="interactions" value="228"/>
</dbReference>
<dbReference type="DIP" id="DIP-1697N"/>
<dbReference type="FunCoup" id="P38884">
    <property type="interactions" value="60"/>
</dbReference>
<dbReference type="IntAct" id="P38884">
    <property type="interactions" value="3"/>
</dbReference>
<dbReference type="MINT" id="P38884"/>
<dbReference type="STRING" id="4932.YHR198C"/>
<dbReference type="PaxDb" id="4932-YHR198C"/>
<dbReference type="PeptideAtlas" id="P38884"/>
<dbReference type="EnsemblFungi" id="YHR198C_mRNA">
    <property type="protein sequence ID" value="YHR198C"/>
    <property type="gene ID" value="YHR198C"/>
</dbReference>
<dbReference type="GeneID" id="856605"/>
<dbReference type="KEGG" id="sce:YHR198C"/>
<dbReference type="AGR" id="SGD:S000001241"/>
<dbReference type="SGD" id="S000001241">
    <property type="gene designation" value="AIM18"/>
</dbReference>
<dbReference type="VEuPathDB" id="FungiDB:YHR198C"/>
<dbReference type="eggNOG" id="ENOG502RGD3">
    <property type="taxonomic scope" value="Eukaryota"/>
</dbReference>
<dbReference type="GeneTree" id="ENSGT00940000176696"/>
<dbReference type="HOGENOM" id="CLU_038840_0_0_1"/>
<dbReference type="InParanoid" id="P38884"/>
<dbReference type="OMA" id="PMRNTNF"/>
<dbReference type="OrthoDB" id="18193at2759"/>
<dbReference type="BioCyc" id="YEAST:G3O-31226-MONOMER"/>
<dbReference type="BioGRID-ORCS" id="856605">
    <property type="hits" value="0 hits in 10 CRISPR screens"/>
</dbReference>
<dbReference type="PRO" id="PR:P38884"/>
<dbReference type="Proteomes" id="UP000002311">
    <property type="component" value="Chromosome VIII"/>
</dbReference>
<dbReference type="RNAct" id="P38884">
    <property type="molecule type" value="protein"/>
</dbReference>
<dbReference type="GO" id="GO:0005743">
    <property type="term" value="C:mitochondrial inner membrane"/>
    <property type="evidence" value="ECO:0000314"/>
    <property type="project" value="SGD"/>
</dbReference>
<dbReference type="GO" id="GO:0005739">
    <property type="term" value="C:mitochondrion"/>
    <property type="evidence" value="ECO:0007005"/>
    <property type="project" value="SGD"/>
</dbReference>
<dbReference type="GO" id="GO:0020037">
    <property type="term" value="F:heme binding"/>
    <property type="evidence" value="ECO:0000314"/>
    <property type="project" value="SGD"/>
</dbReference>
<dbReference type="GO" id="GO:0016872">
    <property type="term" value="F:intramolecular lyase activity"/>
    <property type="evidence" value="ECO:0007669"/>
    <property type="project" value="InterPro"/>
</dbReference>
<dbReference type="Gene3D" id="3.50.70.10">
    <property type="match status" value="1"/>
</dbReference>
<dbReference type="InterPro" id="IPR016087">
    <property type="entry name" value="Chalcone_isomerase"/>
</dbReference>
<dbReference type="InterPro" id="IPR016088">
    <property type="entry name" value="Chalcone_isomerase_3-sand"/>
</dbReference>
<dbReference type="InterPro" id="IPR036298">
    <property type="entry name" value="Chalcone_isomerase_sf"/>
</dbReference>
<dbReference type="PANTHER" id="PTHR47284">
    <property type="entry name" value="FATTY-ACID-BINDING PROTEIN 2"/>
    <property type="match status" value="1"/>
</dbReference>
<dbReference type="PANTHER" id="PTHR47284:SF3">
    <property type="entry name" value="FATTY-ACID-BINDING PROTEIN 2"/>
    <property type="match status" value="1"/>
</dbReference>
<dbReference type="Pfam" id="PF16035">
    <property type="entry name" value="Chalcone_2"/>
    <property type="match status" value="1"/>
</dbReference>
<dbReference type="SUPFAM" id="SSF54626">
    <property type="entry name" value="Chalcone isomerase"/>
    <property type="match status" value="1"/>
</dbReference>
<organism>
    <name type="scientific">Saccharomyces cerevisiae (strain ATCC 204508 / S288c)</name>
    <name type="common">Baker's yeast</name>
    <dbReference type="NCBI Taxonomy" id="559292"/>
    <lineage>
        <taxon>Eukaryota</taxon>
        <taxon>Fungi</taxon>
        <taxon>Dikarya</taxon>
        <taxon>Ascomycota</taxon>
        <taxon>Saccharomycotina</taxon>
        <taxon>Saccharomycetes</taxon>
        <taxon>Saccharomycetales</taxon>
        <taxon>Saccharomycetaceae</taxon>
        <taxon>Saccharomyces</taxon>
    </lineage>
</organism>
<protein>
    <recommendedName>
        <fullName>Altered inheritance of mitochondria protein 18, mitochondrial</fullName>
    </recommendedName>
    <alternativeName>
        <fullName>Found in mitochondrial proteome protein 22</fullName>
    </alternativeName>
</protein>
<evidence type="ECO:0000255" key="1"/>
<evidence type="ECO:0000269" key="2">
    <source>
    </source>
</evidence>
<evidence type="ECO:0000269" key="3">
    <source>
    </source>
</evidence>
<evidence type="ECO:0000269" key="4">
    <source>
    </source>
</evidence>
<evidence type="ECO:0000305" key="5"/>
<evidence type="ECO:0007829" key="6">
    <source>
        <dbReference type="PDB" id="8EW8"/>
    </source>
</evidence>
<name>AIM18_YEAST</name>